<feature type="chain" id="PRO_1000009891" description="Uracil-DNA glycosylase">
    <location>
        <begin position="1"/>
        <end position="220"/>
    </location>
</feature>
<feature type="active site" description="Proton acceptor" evidence="1">
    <location>
        <position position="60"/>
    </location>
</feature>
<sequence>MTWSDILAEEKQQPYFKQILDFLACESANGKVIFPAKENIFNAFKYTELDNLKVVILGQDPYHNYNQAHGLAFSVQKGVDIPPSLQNIYKELARSIPEFKIPNHGYLVDWAKQGVFLLNTTLTVEAHKANSHKDIGWETFTDTVISKISENKHNVVFMLWGSHARKKKVLIDSSRHLILESTHPSPLSAHRGFLGCNHFVDCNKYLIEKKSQKIDWNLLC</sequence>
<evidence type="ECO:0000255" key="1">
    <source>
        <dbReference type="HAMAP-Rule" id="MF_00148"/>
    </source>
</evidence>
<name>UNG_FRATN</name>
<reference key="1">
    <citation type="journal article" date="2007" name="Genome Biol.">
        <title>Comparison of Francisella tularensis genomes reveals evolutionary events associated with the emergence of human pathogenic strains.</title>
        <authorList>
            <person name="Rohmer L."/>
            <person name="Fong C."/>
            <person name="Abmayr S."/>
            <person name="Wasnick M."/>
            <person name="Larson Freeman T.J."/>
            <person name="Radey M."/>
            <person name="Guina T."/>
            <person name="Svensson K."/>
            <person name="Hayden H.S."/>
            <person name="Jacobs M."/>
            <person name="Gallagher L.A."/>
            <person name="Manoil C."/>
            <person name="Ernst R.K."/>
            <person name="Drees B."/>
            <person name="Buckley D."/>
            <person name="Haugen E."/>
            <person name="Bovee D."/>
            <person name="Zhou Y."/>
            <person name="Chang J."/>
            <person name="Levy R."/>
            <person name="Lim R."/>
            <person name="Gillett W."/>
            <person name="Guenthener D."/>
            <person name="Kang A."/>
            <person name="Shaffer S.A."/>
            <person name="Taylor G."/>
            <person name="Chen J."/>
            <person name="Gallis B."/>
            <person name="D'Argenio D.A."/>
            <person name="Forsman M."/>
            <person name="Olson M.V."/>
            <person name="Goodlett D.R."/>
            <person name="Kaul R."/>
            <person name="Miller S.I."/>
            <person name="Brittnacher M.J."/>
        </authorList>
    </citation>
    <scope>NUCLEOTIDE SEQUENCE [LARGE SCALE GENOMIC DNA]</scope>
    <source>
        <strain>U112</strain>
    </source>
</reference>
<gene>
    <name evidence="1" type="primary">ung</name>
    <name type="ordered locus">FTN_1486</name>
</gene>
<keyword id="KW-0963">Cytoplasm</keyword>
<keyword id="KW-0227">DNA damage</keyword>
<keyword id="KW-0234">DNA repair</keyword>
<keyword id="KW-0378">Hydrolase</keyword>
<proteinExistence type="inferred from homology"/>
<comment type="function">
    <text evidence="1">Excises uracil residues from the DNA which can arise as a result of misincorporation of dUMP residues by DNA polymerase or due to deamination of cytosine.</text>
</comment>
<comment type="catalytic activity">
    <reaction evidence="1">
        <text>Hydrolyzes single-stranded DNA or mismatched double-stranded DNA and polynucleotides, releasing free uracil.</text>
        <dbReference type="EC" id="3.2.2.27"/>
    </reaction>
</comment>
<comment type="subcellular location">
    <subcellularLocation>
        <location evidence="1">Cytoplasm</location>
    </subcellularLocation>
</comment>
<comment type="similarity">
    <text evidence="1">Belongs to the uracil-DNA glycosylase (UDG) superfamily. UNG family.</text>
</comment>
<dbReference type="EC" id="3.2.2.27" evidence="1"/>
<dbReference type="EMBL" id="CP000439">
    <property type="protein sequence ID" value="ABK90353.1"/>
    <property type="molecule type" value="Genomic_DNA"/>
</dbReference>
<dbReference type="RefSeq" id="WP_003040469.1">
    <property type="nucleotide sequence ID" value="NC_008601.1"/>
</dbReference>
<dbReference type="SMR" id="A0Q7Y8"/>
<dbReference type="KEGG" id="ftn:FTN_1486"/>
<dbReference type="KEGG" id="ftx:AW25_515"/>
<dbReference type="BioCyc" id="FTUL401614:G1G75-1534-MONOMER"/>
<dbReference type="Proteomes" id="UP000000762">
    <property type="component" value="Chromosome"/>
</dbReference>
<dbReference type="GO" id="GO:0005737">
    <property type="term" value="C:cytoplasm"/>
    <property type="evidence" value="ECO:0007669"/>
    <property type="project" value="UniProtKB-SubCell"/>
</dbReference>
<dbReference type="GO" id="GO:0004844">
    <property type="term" value="F:uracil DNA N-glycosylase activity"/>
    <property type="evidence" value="ECO:0007669"/>
    <property type="project" value="UniProtKB-UniRule"/>
</dbReference>
<dbReference type="GO" id="GO:0097510">
    <property type="term" value="P:base-excision repair, AP site formation via deaminated base removal"/>
    <property type="evidence" value="ECO:0007669"/>
    <property type="project" value="TreeGrafter"/>
</dbReference>
<dbReference type="CDD" id="cd10027">
    <property type="entry name" value="UDG-F1-like"/>
    <property type="match status" value="1"/>
</dbReference>
<dbReference type="FunFam" id="3.40.470.10:FF:000001">
    <property type="entry name" value="Uracil-DNA glycosylase"/>
    <property type="match status" value="1"/>
</dbReference>
<dbReference type="Gene3D" id="3.40.470.10">
    <property type="entry name" value="Uracil-DNA glycosylase-like domain"/>
    <property type="match status" value="1"/>
</dbReference>
<dbReference type="HAMAP" id="MF_00148">
    <property type="entry name" value="UDG"/>
    <property type="match status" value="1"/>
</dbReference>
<dbReference type="InterPro" id="IPR002043">
    <property type="entry name" value="UDG_fam1"/>
</dbReference>
<dbReference type="InterPro" id="IPR018085">
    <property type="entry name" value="Ura-DNA_Glyclase_AS"/>
</dbReference>
<dbReference type="InterPro" id="IPR005122">
    <property type="entry name" value="Uracil-DNA_glycosylase-like"/>
</dbReference>
<dbReference type="InterPro" id="IPR036895">
    <property type="entry name" value="Uracil-DNA_glycosylase-like_sf"/>
</dbReference>
<dbReference type="NCBIfam" id="NF003588">
    <property type="entry name" value="PRK05254.1-1"/>
    <property type="match status" value="1"/>
</dbReference>
<dbReference type="NCBIfam" id="NF003589">
    <property type="entry name" value="PRK05254.1-2"/>
    <property type="match status" value="1"/>
</dbReference>
<dbReference type="NCBIfam" id="NF003591">
    <property type="entry name" value="PRK05254.1-4"/>
    <property type="match status" value="1"/>
</dbReference>
<dbReference type="NCBIfam" id="NF003592">
    <property type="entry name" value="PRK05254.1-5"/>
    <property type="match status" value="1"/>
</dbReference>
<dbReference type="NCBIfam" id="TIGR00628">
    <property type="entry name" value="ung"/>
    <property type="match status" value="1"/>
</dbReference>
<dbReference type="PANTHER" id="PTHR11264">
    <property type="entry name" value="URACIL-DNA GLYCOSYLASE"/>
    <property type="match status" value="1"/>
</dbReference>
<dbReference type="PANTHER" id="PTHR11264:SF0">
    <property type="entry name" value="URACIL-DNA GLYCOSYLASE"/>
    <property type="match status" value="1"/>
</dbReference>
<dbReference type="Pfam" id="PF03167">
    <property type="entry name" value="UDG"/>
    <property type="match status" value="1"/>
</dbReference>
<dbReference type="SMART" id="SM00986">
    <property type="entry name" value="UDG"/>
    <property type="match status" value="1"/>
</dbReference>
<dbReference type="SMART" id="SM00987">
    <property type="entry name" value="UreE_C"/>
    <property type="match status" value="1"/>
</dbReference>
<dbReference type="SUPFAM" id="SSF52141">
    <property type="entry name" value="Uracil-DNA glycosylase-like"/>
    <property type="match status" value="1"/>
</dbReference>
<dbReference type="PROSITE" id="PS00130">
    <property type="entry name" value="U_DNA_GLYCOSYLASE"/>
    <property type="match status" value="1"/>
</dbReference>
<accession>A0Q7Y8</accession>
<protein>
    <recommendedName>
        <fullName evidence="1">Uracil-DNA glycosylase</fullName>
        <shortName evidence="1">UDG</shortName>
        <ecNumber evidence="1">3.2.2.27</ecNumber>
    </recommendedName>
</protein>
<organism>
    <name type="scientific">Francisella tularensis subsp. novicida (strain U112)</name>
    <dbReference type="NCBI Taxonomy" id="401614"/>
    <lineage>
        <taxon>Bacteria</taxon>
        <taxon>Pseudomonadati</taxon>
        <taxon>Pseudomonadota</taxon>
        <taxon>Gammaproteobacteria</taxon>
        <taxon>Thiotrichales</taxon>
        <taxon>Francisellaceae</taxon>
        <taxon>Francisella</taxon>
    </lineage>
</organism>